<accession>A7ZF35</accession>
<sequence length="311" mass="34381">MSNYLDFEKSIKQIDEDIANAKIRGDEHAVEILNKNLSKEISKVYKNLNEYQRLQLARHPDRPYAIDYINSFLVDGYEVHGDRAFRDDPAIVCYIGYIGGKKTVVIGEQKGRGTKNKLKRNFGMPHPEGYRKALRVAKLAEKFNLPILFLIDTPGAYPGVGAEERGQSEAIARNLFEFANLKTPIIAVVIGEGGSGGALAIGVADRLAMMKNSVFSVISPEGCAAILWNDPTKQEQATKSMKITADDLKNLSLIDDVINEPINGAHRDKDGAAKALANYFISELAELEKLDINELVAKRIDKVLSIGAYEE</sequence>
<dbReference type="EC" id="2.1.3.15" evidence="1"/>
<dbReference type="EMBL" id="CP000792">
    <property type="protein sequence ID" value="EAT99311.1"/>
    <property type="molecule type" value="Genomic_DNA"/>
</dbReference>
<dbReference type="RefSeq" id="WP_012140276.1">
    <property type="nucleotide sequence ID" value="NC_009802.2"/>
</dbReference>
<dbReference type="SMR" id="A7ZF35"/>
<dbReference type="STRING" id="360104.CCC13826_0559"/>
<dbReference type="KEGG" id="cco:CCC13826_0559"/>
<dbReference type="eggNOG" id="COG0825">
    <property type="taxonomic scope" value="Bacteria"/>
</dbReference>
<dbReference type="HOGENOM" id="CLU_015486_0_2_7"/>
<dbReference type="OrthoDB" id="9808023at2"/>
<dbReference type="UniPathway" id="UPA00655">
    <property type="reaction ID" value="UER00711"/>
</dbReference>
<dbReference type="Proteomes" id="UP000001121">
    <property type="component" value="Chromosome"/>
</dbReference>
<dbReference type="GO" id="GO:0009317">
    <property type="term" value="C:acetyl-CoA carboxylase complex"/>
    <property type="evidence" value="ECO:0007669"/>
    <property type="project" value="InterPro"/>
</dbReference>
<dbReference type="GO" id="GO:0003989">
    <property type="term" value="F:acetyl-CoA carboxylase activity"/>
    <property type="evidence" value="ECO:0007669"/>
    <property type="project" value="InterPro"/>
</dbReference>
<dbReference type="GO" id="GO:0005524">
    <property type="term" value="F:ATP binding"/>
    <property type="evidence" value="ECO:0007669"/>
    <property type="project" value="UniProtKB-KW"/>
</dbReference>
<dbReference type="GO" id="GO:0016743">
    <property type="term" value="F:carboxyl- or carbamoyltransferase activity"/>
    <property type="evidence" value="ECO:0007669"/>
    <property type="project" value="UniProtKB-UniRule"/>
</dbReference>
<dbReference type="GO" id="GO:0006633">
    <property type="term" value="P:fatty acid biosynthetic process"/>
    <property type="evidence" value="ECO:0007669"/>
    <property type="project" value="UniProtKB-KW"/>
</dbReference>
<dbReference type="GO" id="GO:2001295">
    <property type="term" value="P:malonyl-CoA biosynthetic process"/>
    <property type="evidence" value="ECO:0007669"/>
    <property type="project" value="UniProtKB-UniRule"/>
</dbReference>
<dbReference type="Gene3D" id="3.90.226.10">
    <property type="entry name" value="2-enoyl-CoA Hydratase, Chain A, domain 1"/>
    <property type="match status" value="1"/>
</dbReference>
<dbReference type="HAMAP" id="MF_00823">
    <property type="entry name" value="AcetylCoA_CT_alpha"/>
    <property type="match status" value="1"/>
</dbReference>
<dbReference type="InterPro" id="IPR001095">
    <property type="entry name" value="Acetyl_CoA_COase_a_su"/>
</dbReference>
<dbReference type="InterPro" id="IPR029045">
    <property type="entry name" value="ClpP/crotonase-like_dom_sf"/>
</dbReference>
<dbReference type="InterPro" id="IPR011763">
    <property type="entry name" value="COA_CT_C"/>
</dbReference>
<dbReference type="NCBIfam" id="TIGR00513">
    <property type="entry name" value="accA"/>
    <property type="match status" value="1"/>
</dbReference>
<dbReference type="NCBIfam" id="NF041504">
    <property type="entry name" value="AccA_sub"/>
    <property type="match status" value="1"/>
</dbReference>
<dbReference type="NCBIfam" id="NF004344">
    <property type="entry name" value="PRK05724.1"/>
    <property type="match status" value="1"/>
</dbReference>
<dbReference type="PANTHER" id="PTHR42853">
    <property type="entry name" value="ACETYL-COENZYME A CARBOXYLASE CARBOXYL TRANSFERASE SUBUNIT ALPHA"/>
    <property type="match status" value="1"/>
</dbReference>
<dbReference type="PANTHER" id="PTHR42853:SF3">
    <property type="entry name" value="ACETYL-COENZYME A CARBOXYLASE CARBOXYL TRANSFERASE SUBUNIT ALPHA, CHLOROPLASTIC"/>
    <property type="match status" value="1"/>
</dbReference>
<dbReference type="Pfam" id="PF03255">
    <property type="entry name" value="ACCA"/>
    <property type="match status" value="1"/>
</dbReference>
<dbReference type="PRINTS" id="PR01069">
    <property type="entry name" value="ACCCTRFRASEA"/>
</dbReference>
<dbReference type="SUPFAM" id="SSF52096">
    <property type="entry name" value="ClpP/crotonase"/>
    <property type="match status" value="1"/>
</dbReference>
<dbReference type="PROSITE" id="PS50989">
    <property type="entry name" value="COA_CT_CTER"/>
    <property type="match status" value="1"/>
</dbReference>
<evidence type="ECO:0000255" key="1">
    <source>
        <dbReference type="HAMAP-Rule" id="MF_00823"/>
    </source>
</evidence>
<evidence type="ECO:0000255" key="2">
    <source>
        <dbReference type="PROSITE-ProRule" id="PRU01137"/>
    </source>
</evidence>
<comment type="function">
    <text evidence="1">Component of the acetyl coenzyme A carboxylase (ACC) complex. First, biotin carboxylase catalyzes the carboxylation of biotin on its carrier protein (BCCP) and then the CO(2) group is transferred by the carboxyltransferase to acetyl-CoA to form malonyl-CoA.</text>
</comment>
<comment type="catalytic activity">
    <reaction evidence="1">
        <text>N(6)-carboxybiotinyl-L-lysyl-[protein] + acetyl-CoA = N(6)-biotinyl-L-lysyl-[protein] + malonyl-CoA</text>
        <dbReference type="Rhea" id="RHEA:54728"/>
        <dbReference type="Rhea" id="RHEA-COMP:10505"/>
        <dbReference type="Rhea" id="RHEA-COMP:10506"/>
        <dbReference type="ChEBI" id="CHEBI:57288"/>
        <dbReference type="ChEBI" id="CHEBI:57384"/>
        <dbReference type="ChEBI" id="CHEBI:83144"/>
        <dbReference type="ChEBI" id="CHEBI:83145"/>
        <dbReference type="EC" id="2.1.3.15"/>
    </reaction>
</comment>
<comment type="pathway">
    <text evidence="1">Lipid metabolism; malonyl-CoA biosynthesis; malonyl-CoA from acetyl-CoA: step 1/1.</text>
</comment>
<comment type="subunit">
    <text evidence="1">Acetyl-CoA carboxylase is a heterohexamer composed of biotin carboxyl carrier protein (AccB), biotin carboxylase (AccC) and two subunits each of ACCase subunit alpha (AccA) and ACCase subunit beta (AccD).</text>
</comment>
<comment type="subcellular location">
    <subcellularLocation>
        <location evidence="1">Cytoplasm</location>
    </subcellularLocation>
</comment>
<comment type="similarity">
    <text evidence="1">Belongs to the AccA family.</text>
</comment>
<proteinExistence type="inferred from homology"/>
<organism>
    <name type="scientific">Campylobacter concisus (strain 13826)</name>
    <dbReference type="NCBI Taxonomy" id="360104"/>
    <lineage>
        <taxon>Bacteria</taxon>
        <taxon>Pseudomonadati</taxon>
        <taxon>Campylobacterota</taxon>
        <taxon>Epsilonproteobacteria</taxon>
        <taxon>Campylobacterales</taxon>
        <taxon>Campylobacteraceae</taxon>
        <taxon>Campylobacter</taxon>
    </lineage>
</organism>
<keyword id="KW-0067">ATP-binding</keyword>
<keyword id="KW-0963">Cytoplasm</keyword>
<keyword id="KW-0275">Fatty acid biosynthesis</keyword>
<keyword id="KW-0276">Fatty acid metabolism</keyword>
<keyword id="KW-0444">Lipid biosynthesis</keyword>
<keyword id="KW-0443">Lipid metabolism</keyword>
<keyword id="KW-0547">Nucleotide-binding</keyword>
<keyword id="KW-0808">Transferase</keyword>
<protein>
    <recommendedName>
        <fullName evidence="1">Acetyl-coenzyme A carboxylase carboxyl transferase subunit alpha</fullName>
        <shortName evidence="1">ACCase subunit alpha</shortName>
        <shortName evidence="1">Acetyl-CoA carboxylase carboxyltransferase subunit alpha</shortName>
        <ecNumber evidence="1">2.1.3.15</ecNumber>
    </recommendedName>
</protein>
<name>ACCA_CAMC1</name>
<feature type="chain" id="PRO_1000072880" description="Acetyl-coenzyme A carboxylase carboxyl transferase subunit alpha">
    <location>
        <begin position="1"/>
        <end position="311"/>
    </location>
</feature>
<feature type="domain" description="CoA carboxyltransferase C-terminal" evidence="2">
    <location>
        <begin position="36"/>
        <end position="286"/>
    </location>
</feature>
<reference key="1">
    <citation type="submission" date="2007-10" db="EMBL/GenBank/DDBJ databases">
        <title>Genome sequence of Campylobacter concisus 13826 isolated from human feces.</title>
        <authorList>
            <person name="Fouts D.E."/>
            <person name="Mongodin E.F."/>
            <person name="Puiu D."/>
            <person name="Sebastian Y."/>
            <person name="Miller W.G."/>
            <person name="Mandrell R.E."/>
            <person name="On S."/>
            <person name="Nelson K.E."/>
        </authorList>
    </citation>
    <scope>NUCLEOTIDE SEQUENCE [LARGE SCALE GENOMIC DNA]</scope>
    <source>
        <strain>13826</strain>
    </source>
</reference>
<gene>
    <name evidence="1" type="primary">accA</name>
    <name type="ordered locus">Ccon26_15470</name>
    <name type="ORF">CCC13826_0559</name>
</gene>